<feature type="chain" id="PRO_0000130857" description="Small ribosomal subunit protein eS4">
    <location>
        <begin position="1"/>
        <end position="243"/>
    </location>
</feature>
<feature type="domain" description="S4 RNA-binding">
    <location>
        <begin position="43"/>
        <end position="105"/>
    </location>
</feature>
<feature type="helix" evidence="5">
    <location>
        <begin position="12"/>
        <end position="14"/>
    </location>
</feature>
<feature type="strand" evidence="3">
    <location>
        <begin position="17"/>
        <end position="19"/>
    </location>
</feature>
<feature type="helix" evidence="5">
    <location>
        <begin position="39"/>
        <end position="41"/>
    </location>
</feature>
<feature type="strand" evidence="5">
    <location>
        <begin position="42"/>
        <end position="44"/>
    </location>
</feature>
<feature type="helix" evidence="5">
    <location>
        <begin position="45"/>
        <end position="49"/>
    </location>
</feature>
<feature type="turn" evidence="5">
    <location>
        <begin position="50"/>
        <end position="52"/>
    </location>
</feature>
<feature type="helix" evidence="5">
    <location>
        <begin position="59"/>
        <end position="67"/>
    </location>
</feature>
<feature type="strand" evidence="5">
    <location>
        <begin position="84"/>
        <end position="86"/>
    </location>
</feature>
<feature type="strand" evidence="5">
    <location>
        <begin position="90"/>
        <end position="93"/>
    </location>
</feature>
<feature type="turn" evidence="5">
    <location>
        <begin position="94"/>
        <end position="97"/>
    </location>
</feature>
<feature type="strand" evidence="5">
    <location>
        <begin position="98"/>
        <end position="104"/>
    </location>
</feature>
<feature type="strand" evidence="4">
    <location>
        <begin position="106"/>
        <end position="108"/>
    </location>
</feature>
<feature type="strand" evidence="5">
    <location>
        <begin position="110"/>
        <end position="114"/>
    </location>
</feature>
<feature type="helix" evidence="5">
    <location>
        <begin position="119"/>
        <end position="121"/>
    </location>
</feature>
<feature type="strand" evidence="5">
    <location>
        <begin position="122"/>
        <end position="133"/>
    </location>
</feature>
<feature type="turn" evidence="5">
    <location>
        <begin position="134"/>
        <end position="136"/>
    </location>
</feature>
<feature type="strand" evidence="5">
    <location>
        <begin position="137"/>
        <end position="142"/>
    </location>
</feature>
<feature type="strand" evidence="5">
    <location>
        <begin position="147"/>
        <end position="150"/>
    </location>
</feature>
<feature type="helix" evidence="5">
    <location>
        <begin position="152"/>
        <end position="154"/>
    </location>
</feature>
<feature type="strand" evidence="2">
    <location>
        <begin position="155"/>
        <end position="157"/>
    </location>
</feature>
<feature type="strand" evidence="5">
    <location>
        <begin position="163"/>
        <end position="167"/>
    </location>
</feature>
<feature type="turn" evidence="5">
    <location>
        <begin position="168"/>
        <end position="171"/>
    </location>
</feature>
<feature type="strand" evidence="5">
    <location>
        <begin position="172"/>
        <end position="177"/>
    </location>
</feature>
<feature type="strand" evidence="5">
    <location>
        <begin position="184"/>
        <end position="187"/>
    </location>
</feature>
<feature type="turn" evidence="5">
    <location>
        <begin position="191"/>
        <end position="194"/>
    </location>
</feature>
<feature type="strand" evidence="5">
    <location>
        <begin position="196"/>
        <end position="203"/>
    </location>
</feature>
<feature type="strand" evidence="5">
    <location>
        <begin position="212"/>
        <end position="216"/>
    </location>
</feature>
<feature type="strand" evidence="5">
    <location>
        <begin position="222"/>
        <end position="226"/>
    </location>
</feature>
<feature type="helix" evidence="5">
    <location>
        <begin position="227"/>
        <end position="229"/>
    </location>
</feature>
<feature type="strand" evidence="5">
    <location>
        <begin position="230"/>
        <end position="240"/>
    </location>
</feature>
<keyword id="KW-0002">3D-structure</keyword>
<keyword id="KW-0687">Ribonucleoprotein</keyword>
<keyword id="KW-0689">Ribosomal protein</keyword>
<keyword id="KW-0694">RNA-binding</keyword>
<keyword id="KW-0699">rRNA-binding</keyword>
<organism>
    <name type="scientific">Pyrococcus abyssi (strain GE5 / Orsay)</name>
    <dbReference type="NCBI Taxonomy" id="272844"/>
    <lineage>
        <taxon>Archaea</taxon>
        <taxon>Methanobacteriati</taxon>
        <taxon>Methanobacteriota</taxon>
        <taxon>Thermococci</taxon>
        <taxon>Thermococcales</taxon>
        <taxon>Thermococcaceae</taxon>
        <taxon>Pyrococcus</taxon>
    </lineage>
</organism>
<sequence>MARKGPKRHLKRLAAPTSWYIERKAYKWAVRPRPGPHNMRTSIPLLYIVRDYLGYAKTAREARKILNEGKFLVDGRVRKDYKFPVGIMDVVSIPETGEHYRVLPNRIGKLILHPISEEEANIKPLRIRNKRMVKGAKIQLNFHDGTNHLIPLSEKDNYFTSYTVLMKVPEREILEVLPFEKGAYVFVTQGKNVARKGRIVEIKKFPMGWPDVVTIEDEEGELFDTLKEYAFVVGRDKPRISLP</sequence>
<evidence type="ECO:0000305" key="1"/>
<evidence type="ECO:0007829" key="2">
    <source>
        <dbReference type="PDB" id="6SWC"/>
    </source>
</evidence>
<evidence type="ECO:0007829" key="3">
    <source>
        <dbReference type="PDB" id="6SWD"/>
    </source>
</evidence>
<evidence type="ECO:0007829" key="4">
    <source>
        <dbReference type="PDB" id="7ZAI"/>
    </source>
</evidence>
<evidence type="ECO:0007829" key="5">
    <source>
        <dbReference type="PDB" id="7ZHG"/>
    </source>
</evidence>
<name>RS4E_PYRAB</name>
<accession>Q9V1U8</accession>
<accession>G8ZHW3</accession>
<protein>
    <recommendedName>
        <fullName evidence="1">Small ribosomal subunit protein eS4</fullName>
    </recommendedName>
    <alternativeName>
        <fullName>30S ribosomal protein S4e</fullName>
    </alternativeName>
</protein>
<comment type="similarity">
    <text evidence="1">Belongs to the eukaryotic ribosomal protein eS4 family.</text>
</comment>
<reference key="1">
    <citation type="journal article" date="2003" name="Mol. Microbiol.">
        <title>An integrated analysis of the genome of the hyperthermophilic archaeon Pyrococcus abyssi.</title>
        <authorList>
            <person name="Cohen G.N."/>
            <person name="Barbe V."/>
            <person name="Flament D."/>
            <person name="Galperin M."/>
            <person name="Heilig R."/>
            <person name="Lecompte O."/>
            <person name="Poch O."/>
            <person name="Prieur D."/>
            <person name="Querellou J."/>
            <person name="Ripp R."/>
            <person name="Thierry J.-C."/>
            <person name="Van der Oost J."/>
            <person name="Weissenbach J."/>
            <person name="Zivanovic Y."/>
            <person name="Forterre P."/>
        </authorList>
    </citation>
    <scope>NUCLEOTIDE SEQUENCE [LARGE SCALE GENOMIC DNA]</scope>
    <source>
        <strain>GE5 / Orsay</strain>
    </source>
</reference>
<reference key="2">
    <citation type="journal article" date="2012" name="Curr. Microbiol.">
        <title>Re-annotation of two hyperthermophilic archaea Pyrococcus abyssi GE5 and Pyrococcus furiosus DSM 3638.</title>
        <authorList>
            <person name="Gao J."/>
            <person name="Wang J."/>
        </authorList>
    </citation>
    <scope>GENOME REANNOTATION</scope>
    <source>
        <strain>GE5 / Orsay</strain>
    </source>
</reference>
<dbReference type="EMBL" id="AJ248284">
    <property type="protein sequence ID" value="CAB49251.1"/>
    <property type="molecule type" value="Genomic_DNA"/>
</dbReference>
<dbReference type="EMBL" id="HE613800">
    <property type="protein sequence ID" value="CCE69706.1"/>
    <property type="molecule type" value="Genomic_DNA"/>
</dbReference>
<dbReference type="PIR" id="D75146">
    <property type="entry name" value="D75146"/>
</dbReference>
<dbReference type="RefSeq" id="WP_010867451.1">
    <property type="nucleotide sequence ID" value="NC_000868.1"/>
</dbReference>
<dbReference type="PDB" id="6SW9">
    <property type="method" value="EM"/>
    <property type="resolution" value="4.20 A"/>
    <property type="chains" value="E=1-243"/>
</dbReference>
<dbReference type="PDB" id="6SWC">
    <property type="method" value="EM"/>
    <property type="resolution" value="3.30 A"/>
    <property type="chains" value="E=1-243"/>
</dbReference>
<dbReference type="PDB" id="6SWD">
    <property type="method" value="EM"/>
    <property type="resolution" value="3.20 A"/>
    <property type="chains" value="E=1-243"/>
</dbReference>
<dbReference type="PDB" id="7ZAG">
    <property type="method" value="EM"/>
    <property type="resolution" value="2.77 A"/>
    <property type="chains" value="E=1-243"/>
</dbReference>
<dbReference type="PDB" id="7ZAH">
    <property type="method" value="EM"/>
    <property type="resolution" value="2.70 A"/>
    <property type="chains" value="E=1-243"/>
</dbReference>
<dbReference type="PDB" id="7ZAI">
    <property type="method" value="EM"/>
    <property type="resolution" value="2.60 A"/>
    <property type="chains" value="E=1-243"/>
</dbReference>
<dbReference type="PDB" id="7ZHG">
    <property type="method" value="EM"/>
    <property type="resolution" value="2.25 A"/>
    <property type="chains" value="E=1-243"/>
</dbReference>
<dbReference type="PDBsum" id="6SW9"/>
<dbReference type="PDBsum" id="6SWC"/>
<dbReference type="PDBsum" id="6SWD"/>
<dbReference type="PDBsum" id="7ZAG"/>
<dbReference type="PDBsum" id="7ZAH"/>
<dbReference type="PDBsum" id="7ZAI"/>
<dbReference type="PDBsum" id="7ZHG"/>
<dbReference type="EMDB" id="EMD-10320"/>
<dbReference type="EMDB" id="EMD-10322"/>
<dbReference type="EMDB" id="EMD-10323"/>
<dbReference type="EMDB" id="EMD-14579"/>
<dbReference type="EMDB" id="EMD-14580"/>
<dbReference type="EMDB" id="EMD-14581"/>
<dbReference type="EMDB" id="EMD-14731"/>
<dbReference type="EMDB" id="EMD-8148"/>
<dbReference type="SMR" id="Q9V1U8"/>
<dbReference type="STRING" id="272844.PAB2397"/>
<dbReference type="KEGG" id="pab:PAB2397"/>
<dbReference type="PATRIC" id="fig|272844.11.peg.350"/>
<dbReference type="eggNOG" id="arCOG04093">
    <property type="taxonomic scope" value="Archaea"/>
</dbReference>
<dbReference type="HOGENOM" id="CLU_060400_0_0_2"/>
<dbReference type="OrthoDB" id="372073at2157"/>
<dbReference type="PhylomeDB" id="Q9V1U8"/>
<dbReference type="Proteomes" id="UP000000810">
    <property type="component" value="Chromosome"/>
</dbReference>
<dbReference type="Proteomes" id="UP000009139">
    <property type="component" value="Chromosome"/>
</dbReference>
<dbReference type="GO" id="GO:0022627">
    <property type="term" value="C:cytosolic small ribosomal subunit"/>
    <property type="evidence" value="ECO:0007669"/>
    <property type="project" value="TreeGrafter"/>
</dbReference>
<dbReference type="GO" id="GO:0019843">
    <property type="term" value="F:rRNA binding"/>
    <property type="evidence" value="ECO:0007669"/>
    <property type="project" value="UniProtKB-KW"/>
</dbReference>
<dbReference type="GO" id="GO:0003735">
    <property type="term" value="F:structural constituent of ribosome"/>
    <property type="evidence" value="ECO:0007669"/>
    <property type="project" value="InterPro"/>
</dbReference>
<dbReference type="GO" id="GO:0006412">
    <property type="term" value="P:translation"/>
    <property type="evidence" value="ECO:0007669"/>
    <property type="project" value="UniProtKB-UniRule"/>
</dbReference>
<dbReference type="CDD" id="cd06087">
    <property type="entry name" value="KOW_RPS4"/>
    <property type="match status" value="1"/>
</dbReference>
<dbReference type="CDD" id="cd00165">
    <property type="entry name" value="S4"/>
    <property type="match status" value="1"/>
</dbReference>
<dbReference type="FunFam" id="2.30.30.30:FF:000090">
    <property type="entry name" value="30S ribosomal protein S4e"/>
    <property type="match status" value="1"/>
</dbReference>
<dbReference type="FunFam" id="3.10.290.10:FF:000002">
    <property type="entry name" value="40S ribosomal protein S4"/>
    <property type="match status" value="1"/>
</dbReference>
<dbReference type="Gene3D" id="2.30.30.30">
    <property type="match status" value="1"/>
</dbReference>
<dbReference type="Gene3D" id="2.40.50.740">
    <property type="match status" value="1"/>
</dbReference>
<dbReference type="Gene3D" id="3.10.290.10">
    <property type="entry name" value="RNA-binding S4 domain"/>
    <property type="match status" value="1"/>
</dbReference>
<dbReference type="HAMAP" id="MF_00485">
    <property type="entry name" value="Ribosomal_eS4"/>
    <property type="match status" value="1"/>
</dbReference>
<dbReference type="InterPro" id="IPR005824">
    <property type="entry name" value="KOW"/>
</dbReference>
<dbReference type="InterPro" id="IPR014722">
    <property type="entry name" value="Rib_uL2_dom2"/>
</dbReference>
<dbReference type="InterPro" id="IPR000876">
    <property type="entry name" value="Ribosomal_eS4"/>
</dbReference>
<dbReference type="InterPro" id="IPR013845">
    <property type="entry name" value="Ribosomal_eS4_central_region"/>
</dbReference>
<dbReference type="InterPro" id="IPR038237">
    <property type="entry name" value="Ribosomal_eS4_central_sf"/>
</dbReference>
<dbReference type="InterPro" id="IPR041982">
    <property type="entry name" value="Ribosomal_eS4_KOW"/>
</dbReference>
<dbReference type="InterPro" id="IPR013843">
    <property type="entry name" value="Ribosomal_eS4_N"/>
</dbReference>
<dbReference type="InterPro" id="IPR018199">
    <property type="entry name" value="Ribosomal_eS4_N_CS"/>
</dbReference>
<dbReference type="InterPro" id="IPR002942">
    <property type="entry name" value="S4_RNA-bd"/>
</dbReference>
<dbReference type="InterPro" id="IPR036986">
    <property type="entry name" value="S4_RNA-bd_sf"/>
</dbReference>
<dbReference type="NCBIfam" id="NF003312">
    <property type="entry name" value="PRK04313.1"/>
    <property type="match status" value="1"/>
</dbReference>
<dbReference type="PANTHER" id="PTHR11581">
    <property type="entry name" value="30S/40S RIBOSOMAL PROTEIN S4"/>
    <property type="match status" value="1"/>
</dbReference>
<dbReference type="PANTHER" id="PTHR11581:SF0">
    <property type="entry name" value="SMALL RIBOSOMAL SUBUNIT PROTEIN ES4"/>
    <property type="match status" value="1"/>
</dbReference>
<dbReference type="Pfam" id="PF00900">
    <property type="entry name" value="Ribosomal_S4e"/>
    <property type="match status" value="1"/>
</dbReference>
<dbReference type="Pfam" id="PF08071">
    <property type="entry name" value="RS4NT"/>
    <property type="match status" value="1"/>
</dbReference>
<dbReference type="Pfam" id="PF01479">
    <property type="entry name" value="S4"/>
    <property type="match status" value="1"/>
</dbReference>
<dbReference type="PIRSF" id="PIRSF002116">
    <property type="entry name" value="Ribosomal_S4"/>
    <property type="match status" value="1"/>
</dbReference>
<dbReference type="SMART" id="SM00739">
    <property type="entry name" value="KOW"/>
    <property type="match status" value="1"/>
</dbReference>
<dbReference type="SMART" id="SM00363">
    <property type="entry name" value="S4"/>
    <property type="match status" value="1"/>
</dbReference>
<dbReference type="SUPFAM" id="SSF55174">
    <property type="entry name" value="Alpha-L RNA-binding motif"/>
    <property type="match status" value="1"/>
</dbReference>
<dbReference type="PROSITE" id="PS00528">
    <property type="entry name" value="RIBOSOMAL_S4E"/>
    <property type="match status" value="1"/>
</dbReference>
<dbReference type="PROSITE" id="PS50889">
    <property type="entry name" value="S4"/>
    <property type="match status" value="1"/>
</dbReference>
<proteinExistence type="evidence at protein level"/>
<gene>
    <name type="primary">rps4e</name>
    <name type="ordered locus">PYRAB03290</name>
    <name type="ORF">PAB2397</name>
</gene>